<protein>
    <recommendedName>
        <fullName evidence="1">Carbamoyl phosphate synthase large chain</fullName>
        <ecNumber evidence="1">6.3.4.16</ecNumber>
        <ecNumber evidence="1">6.3.5.5</ecNumber>
    </recommendedName>
    <alternativeName>
        <fullName evidence="1">Carbamoyl phosphate synthetase ammonia chain</fullName>
    </alternativeName>
</protein>
<accession>Q2FHN5</accession>
<keyword id="KW-0028">Amino-acid biosynthesis</keyword>
<keyword id="KW-0055">Arginine biosynthesis</keyword>
<keyword id="KW-0067">ATP-binding</keyword>
<keyword id="KW-0436">Ligase</keyword>
<keyword id="KW-0460">Magnesium</keyword>
<keyword id="KW-0464">Manganese</keyword>
<keyword id="KW-0479">Metal-binding</keyword>
<keyword id="KW-0547">Nucleotide-binding</keyword>
<keyword id="KW-0665">Pyrimidine biosynthesis</keyword>
<keyword id="KW-0677">Repeat</keyword>
<sequence>MPKRNDIKTILVIGSGPIIIGQAAEFDYAGTQACLALKEEGYRVILVNSNPATIMTDKEIADKVYIEPLTHDFIARIIRKEQPDALLPTLGGQTGLNMAIQLHESGVLQDNNVQLLGTELTSIQQAEDREMFRTLMNDLNVPVPESDIVNTVEQAFKFKEQVGYPLIVRPAFTMGGTGGGICHNDEELHEIVSNGLHYSPATQCLLEKSIAGFKEIEYEVMRDKNDNAIVVCNMENIDPVGIHTGDSIVVAPSQTLSDVEYQMLRDVSLKVIRALGIEGGCNVQLALDPHSFDYYIIEVNPRVSRSSALASKATGYPIAKLAAKIAVGLTLDEMLNPITGTSYAAFEPTLDYVISKIPRFPFDKFEKGERELGTQMKATGEVMAIGRTYEESLLKAIRSLEYGVHHLGLPNGESFDLDYIKERISHQDDERLFFIGEAIRRGTTLEEIHNMTQIDYFFLHKFQNIIDIEHQLKEHQGDLEYLKYAKDYGFSDKTIAHRFNMTEEEVYQLRMENDIKPVYKMVDTCAAEFESSTPYYYGTYETENESIVTDKEKILVLGSGPIRIGQGVEFDYATVHAVWAIQKAGYEAIIVNNNPETVSTDFSISDKLYFEPLTEEDVMNIINLEKPKGVVVQFGGQTAINLADKLAKHGVKILGTSLENLNRAEDRKEFEALLRKINVPQPQGKTATSPEEALANAAEIGYPVVVRPSYVLGGRAMEIVDNDKELENYMTQAVKASPEHPVLVDRYLTGKEIEVDAICDGETVIIPGIMEHIERAGVHSGDSIAVYPPQTLTEDELATLEDYTIKLAKGLNIIGLINIQFVIAHDGVYVLEVNPRSSRTVPFLSKITDIPMAQLAMRAIIGEKLTDMGYQEGVQPYAEGVFVKAPVFSFNKLKNVDITLGPEMKSTGEVMGKDTTLEKALFKGLTGSGVEVKDHGTVLMTVSDKDKEEVVKLAQRLNEVGYKILATSGTANKLAEYDIPAEVVGKIGGENDLLTRIQNGDVQIVINTMTKGKEVERDGFQIRRTTVENGIPCLTSLDTANALTNVIESMTFTMRQM</sequence>
<gene>
    <name evidence="1" type="primary">carB</name>
    <name type="ordered locus">SAUSA300_1096</name>
</gene>
<organism>
    <name type="scientific">Staphylococcus aureus (strain USA300)</name>
    <dbReference type="NCBI Taxonomy" id="367830"/>
    <lineage>
        <taxon>Bacteria</taxon>
        <taxon>Bacillati</taxon>
        <taxon>Bacillota</taxon>
        <taxon>Bacilli</taxon>
        <taxon>Bacillales</taxon>
        <taxon>Staphylococcaceae</taxon>
        <taxon>Staphylococcus</taxon>
    </lineage>
</organism>
<proteinExistence type="inferred from homology"/>
<reference key="1">
    <citation type="journal article" date="2006" name="Lancet">
        <title>Complete genome sequence of USA300, an epidemic clone of community-acquired meticillin-resistant Staphylococcus aureus.</title>
        <authorList>
            <person name="Diep B.A."/>
            <person name="Gill S.R."/>
            <person name="Chang R.F."/>
            <person name="Phan T.H."/>
            <person name="Chen J.H."/>
            <person name="Davidson M.G."/>
            <person name="Lin F."/>
            <person name="Lin J."/>
            <person name="Carleton H.A."/>
            <person name="Mongodin E.F."/>
            <person name="Sensabaugh G.F."/>
            <person name="Perdreau-Remington F."/>
        </authorList>
    </citation>
    <scope>NUCLEOTIDE SEQUENCE [LARGE SCALE GENOMIC DNA]</scope>
    <source>
        <strain>USA300</strain>
    </source>
</reference>
<feature type="chain" id="PRO_1000066379" description="Carbamoyl phosphate synthase large chain">
    <location>
        <begin position="1"/>
        <end position="1057"/>
    </location>
</feature>
<feature type="domain" description="ATP-grasp 1" evidence="1">
    <location>
        <begin position="133"/>
        <end position="327"/>
    </location>
</feature>
<feature type="domain" description="ATP-grasp 2" evidence="1">
    <location>
        <begin position="671"/>
        <end position="861"/>
    </location>
</feature>
<feature type="domain" description="MGS-like" evidence="1">
    <location>
        <begin position="930"/>
        <end position="1057"/>
    </location>
</feature>
<feature type="region of interest" description="Carboxyphosphate synthetic domain" evidence="1">
    <location>
        <begin position="1"/>
        <end position="401"/>
    </location>
</feature>
<feature type="region of interest" description="Oligomerization domain" evidence="1">
    <location>
        <begin position="402"/>
        <end position="546"/>
    </location>
</feature>
<feature type="region of interest" description="Carbamoyl phosphate synthetic domain" evidence="1">
    <location>
        <begin position="547"/>
        <end position="929"/>
    </location>
</feature>
<feature type="region of interest" description="Allosteric domain" evidence="1">
    <location>
        <begin position="930"/>
        <end position="1057"/>
    </location>
</feature>
<feature type="binding site" evidence="1">
    <location>
        <position position="129"/>
    </location>
    <ligand>
        <name>ATP</name>
        <dbReference type="ChEBI" id="CHEBI:30616"/>
        <label>1</label>
    </ligand>
</feature>
<feature type="binding site" evidence="1">
    <location>
        <position position="169"/>
    </location>
    <ligand>
        <name>ATP</name>
        <dbReference type="ChEBI" id="CHEBI:30616"/>
        <label>1</label>
    </ligand>
</feature>
<feature type="binding site" evidence="1">
    <location>
        <position position="175"/>
    </location>
    <ligand>
        <name>ATP</name>
        <dbReference type="ChEBI" id="CHEBI:30616"/>
        <label>1</label>
    </ligand>
</feature>
<feature type="binding site" evidence="1">
    <location>
        <position position="176"/>
    </location>
    <ligand>
        <name>ATP</name>
        <dbReference type="ChEBI" id="CHEBI:30616"/>
        <label>1</label>
    </ligand>
</feature>
<feature type="binding site" evidence="1">
    <location>
        <position position="208"/>
    </location>
    <ligand>
        <name>ATP</name>
        <dbReference type="ChEBI" id="CHEBI:30616"/>
        <label>1</label>
    </ligand>
</feature>
<feature type="binding site" evidence="1">
    <location>
        <position position="210"/>
    </location>
    <ligand>
        <name>ATP</name>
        <dbReference type="ChEBI" id="CHEBI:30616"/>
        <label>1</label>
    </ligand>
</feature>
<feature type="binding site" evidence="1">
    <location>
        <position position="215"/>
    </location>
    <ligand>
        <name>ATP</name>
        <dbReference type="ChEBI" id="CHEBI:30616"/>
        <label>1</label>
    </ligand>
</feature>
<feature type="binding site" evidence="1">
    <location>
        <position position="241"/>
    </location>
    <ligand>
        <name>ATP</name>
        <dbReference type="ChEBI" id="CHEBI:30616"/>
        <label>1</label>
    </ligand>
</feature>
<feature type="binding site" evidence="1">
    <location>
        <position position="242"/>
    </location>
    <ligand>
        <name>ATP</name>
        <dbReference type="ChEBI" id="CHEBI:30616"/>
        <label>1</label>
    </ligand>
</feature>
<feature type="binding site" evidence="1">
    <location>
        <position position="243"/>
    </location>
    <ligand>
        <name>ATP</name>
        <dbReference type="ChEBI" id="CHEBI:30616"/>
        <label>1</label>
    </ligand>
</feature>
<feature type="binding site" evidence="1">
    <location>
        <position position="284"/>
    </location>
    <ligand>
        <name>ATP</name>
        <dbReference type="ChEBI" id="CHEBI:30616"/>
        <label>1</label>
    </ligand>
</feature>
<feature type="binding site" evidence="1">
    <location>
        <position position="284"/>
    </location>
    <ligand>
        <name>Mg(2+)</name>
        <dbReference type="ChEBI" id="CHEBI:18420"/>
        <label>1</label>
    </ligand>
</feature>
<feature type="binding site" evidence="1">
    <location>
        <position position="284"/>
    </location>
    <ligand>
        <name>Mn(2+)</name>
        <dbReference type="ChEBI" id="CHEBI:29035"/>
        <label>1</label>
    </ligand>
</feature>
<feature type="binding site" evidence="1">
    <location>
        <position position="298"/>
    </location>
    <ligand>
        <name>ATP</name>
        <dbReference type="ChEBI" id="CHEBI:30616"/>
        <label>1</label>
    </ligand>
</feature>
<feature type="binding site" evidence="1">
    <location>
        <position position="298"/>
    </location>
    <ligand>
        <name>Mg(2+)</name>
        <dbReference type="ChEBI" id="CHEBI:18420"/>
        <label>1</label>
    </ligand>
</feature>
<feature type="binding site" evidence="1">
    <location>
        <position position="298"/>
    </location>
    <ligand>
        <name>Mg(2+)</name>
        <dbReference type="ChEBI" id="CHEBI:18420"/>
        <label>2</label>
    </ligand>
</feature>
<feature type="binding site" evidence="1">
    <location>
        <position position="298"/>
    </location>
    <ligand>
        <name>Mn(2+)</name>
        <dbReference type="ChEBI" id="CHEBI:29035"/>
        <label>1</label>
    </ligand>
</feature>
<feature type="binding site" evidence="1">
    <location>
        <position position="298"/>
    </location>
    <ligand>
        <name>Mn(2+)</name>
        <dbReference type="ChEBI" id="CHEBI:29035"/>
        <label>2</label>
    </ligand>
</feature>
<feature type="binding site" evidence="1">
    <location>
        <position position="300"/>
    </location>
    <ligand>
        <name>Mg(2+)</name>
        <dbReference type="ChEBI" id="CHEBI:18420"/>
        <label>2</label>
    </ligand>
</feature>
<feature type="binding site" evidence="1">
    <location>
        <position position="300"/>
    </location>
    <ligand>
        <name>Mn(2+)</name>
        <dbReference type="ChEBI" id="CHEBI:29035"/>
        <label>2</label>
    </ligand>
</feature>
<feature type="binding site" evidence="1">
    <location>
        <position position="707"/>
    </location>
    <ligand>
        <name>ATP</name>
        <dbReference type="ChEBI" id="CHEBI:30616"/>
        <label>2</label>
    </ligand>
</feature>
<feature type="binding site" evidence="1">
    <location>
        <position position="746"/>
    </location>
    <ligand>
        <name>ATP</name>
        <dbReference type="ChEBI" id="CHEBI:30616"/>
        <label>2</label>
    </ligand>
</feature>
<feature type="binding site" evidence="1">
    <location>
        <position position="748"/>
    </location>
    <ligand>
        <name>ATP</name>
        <dbReference type="ChEBI" id="CHEBI:30616"/>
        <label>2</label>
    </ligand>
</feature>
<feature type="binding site" evidence="1">
    <location>
        <position position="752"/>
    </location>
    <ligand>
        <name>ATP</name>
        <dbReference type="ChEBI" id="CHEBI:30616"/>
        <label>2</label>
    </ligand>
</feature>
<feature type="binding site" evidence="1">
    <location>
        <position position="777"/>
    </location>
    <ligand>
        <name>ATP</name>
        <dbReference type="ChEBI" id="CHEBI:30616"/>
        <label>2</label>
    </ligand>
</feature>
<feature type="binding site" evidence="1">
    <location>
        <position position="778"/>
    </location>
    <ligand>
        <name>ATP</name>
        <dbReference type="ChEBI" id="CHEBI:30616"/>
        <label>2</label>
    </ligand>
</feature>
<feature type="binding site" evidence="1">
    <location>
        <position position="779"/>
    </location>
    <ligand>
        <name>ATP</name>
        <dbReference type="ChEBI" id="CHEBI:30616"/>
        <label>2</label>
    </ligand>
</feature>
<feature type="binding site" evidence="1">
    <location>
        <position position="780"/>
    </location>
    <ligand>
        <name>ATP</name>
        <dbReference type="ChEBI" id="CHEBI:30616"/>
        <label>2</label>
    </ligand>
</feature>
<feature type="binding site" evidence="1">
    <location>
        <position position="820"/>
    </location>
    <ligand>
        <name>ATP</name>
        <dbReference type="ChEBI" id="CHEBI:30616"/>
        <label>2</label>
    </ligand>
</feature>
<feature type="binding site" evidence="1">
    <location>
        <position position="820"/>
    </location>
    <ligand>
        <name>Mg(2+)</name>
        <dbReference type="ChEBI" id="CHEBI:18420"/>
        <label>3</label>
    </ligand>
</feature>
<feature type="binding site" evidence="1">
    <location>
        <position position="820"/>
    </location>
    <ligand>
        <name>Mn(2+)</name>
        <dbReference type="ChEBI" id="CHEBI:29035"/>
        <label>3</label>
    </ligand>
</feature>
<feature type="binding site" evidence="1">
    <location>
        <position position="832"/>
    </location>
    <ligand>
        <name>ATP</name>
        <dbReference type="ChEBI" id="CHEBI:30616"/>
        <label>2</label>
    </ligand>
</feature>
<feature type="binding site" evidence="1">
    <location>
        <position position="832"/>
    </location>
    <ligand>
        <name>Mg(2+)</name>
        <dbReference type="ChEBI" id="CHEBI:18420"/>
        <label>3</label>
    </ligand>
</feature>
<feature type="binding site" evidence="1">
    <location>
        <position position="832"/>
    </location>
    <ligand>
        <name>Mg(2+)</name>
        <dbReference type="ChEBI" id="CHEBI:18420"/>
        <label>4</label>
    </ligand>
</feature>
<feature type="binding site" evidence="1">
    <location>
        <position position="832"/>
    </location>
    <ligand>
        <name>Mn(2+)</name>
        <dbReference type="ChEBI" id="CHEBI:29035"/>
        <label>3</label>
    </ligand>
</feature>
<feature type="binding site" evidence="1">
    <location>
        <position position="832"/>
    </location>
    <ligand>
        <name>Mn(2+)</name>
        <dbReference type="ChEBI" id="CHEBI:29035"/>
        <label>4</label>
    </ligand>
</feature>
<feature type="binding site" evidence="1">
    <location>
        <position position="834"/>
    </location>
    <ligand>
        <name>Mg(2+)</name>
        <dbReference type="ChEBI" id="CHEBI:18420"/>
        <label>4</label>
    </ligand>
</feature>
<feature type="binding site" evidence="1">
    <location>
        <position position="834"/>
    </location>
    <ligand>
        <name>Mn(2+)</name>
        <dbReference type="ChEBI" id="CHEBI:29035"/>
        <label>4</label>
    </ligand>
</feature>
<name>CARB_STAA3</name>
<dbReference type="EC" id="6.3.4.16" evidence="1"/>
<dbReference type="EC" id="6.3.5.5" evidence="1"/>
<dbReference type="EMBL" id="CP000255">
    <property type="protein sequence ID" value="ABD20564.1"/>
    <property type="molecule type" value="Genomic_DNA"/>
</dbReference>
<dbReference type="RefSeq" id="WP_001126264.1">
    <property type="nucleotide sequence ID" value="NZ_CP027476.1"/>
</dbReference>
<dbReference type="SMR" id="Q2FHN5"/>
<dbReference type="KEGG" id="saa:SAUSA300_1096"/>
<dbReference type="HOGENOM" id="CLU_000513_1_2_9"/>
<dbReference type="OMA" id="FPFNKFP"/>
<dbReference type="UniPathway" id="UPA00068">
    <property type="reaction ID" value="UER00171"/>
</dbReference>
<dbReference type="UniPathway" id="UPA00070">
    <property type="reaction ID" value="UER00115"/>
</dbReference>
<dbReference type="Proteomes" id="UP000001939">
    <property type="component" value="Chromosome"/>
</dbReference>
<dbReference type="GO" id="GO:0005737">
    <property type="term" value="C:cytoplasm"/>
    <property type="evidence" value="ECO:0007669"/>
    <property type="project" value="TreeGrafter"/>
</dbReference>
<dbReference type="GO" id="GO:0005524">
    <property type="term" value="F:ATP binding"/>
    <property type="evidence" value="ECO:0007669"/>
    <property type="project" value="UniProtKB-UniRule"/>
</dbReference>
<dbReference type="GO" id="GO:0004087">
    <property type="term" value="F:carbamoyl-phosphate synthase (ammonia) activity"/>
    <property type="evidence" value="ECO:0007669"/>
    <property type="project" value="RHEA"/>
</dbReference>
<dbReference type="GO" id="GO:0004088">
    <property type="term" value="F:carbamoyl-phosphate synthase (glutamine-hydrolyzing) activity"/>
    <property type="evidence" value="ECO:0007669"/>
    <property type="project" value="UniProtKB-UniRule"/>
</dbReference>
<dbReference type="GO" id="GO:0046872">
    <property type="term" value="F:metal ion binding"/>
    <property type="evidence" value="ECO:0007669"/>
    <property type="project" value="UniProtKB-KW"/>
</dbReference>
<dbReference type="GO" id="GO:0044205">
    <property type="term" value="P:'de novo' UMP biosynthetic process"/>
    <property type="evidence" value="ECO:0007669"/>
    <property type="project" value="UniProtKB-UniRule"/>
</dbReference>
<dbReference type="GO" id="GO:0006541">
    <property type="term" value="P:glutamine metabolic process"/>
    <property type="evidence" value="ECO:0007669"/>
    <property type="project" value="TreeGrafter"/>
</dbReference>
<dbReference type="GO" id="GO:0006526">
    <property type="term" value="P:L-arginine biosynthetic process"/>
    <property type="evidence" value="ECO:0007669"/>
    <property type="project" value="UniProtKB-UniRule"/>
</dbReference>
<dbReference type="CDD" id="cd01424">
    <property type="entry name" value="MGS_CPS_II"/>
    <property type="match status" value="1"/>
</dbReference>
<dbReference type="FunFam" id="1.10.1030.10:FF:000002">
    <property type="entry name" value="Carbamoyl-phosphate synthase large chain"/>
    <property type="match status" value="1"/>
</dbReference>
<dbReference type="FunFam" id="3.30.1490.20:FF:000001">
    <property type="entry name" value="Carbamoyl-phosphate synthase large chain"/>
    <property type="match status" value="1"/>
</dbReference>
<dbReference type="FunFam" id="3.30.470.20:FF:000001">
    <property type="entry name" value="Carbamoyl-phosphate synthase large chain"/>
    <property type="match status" value="1"/>
</dbReference>
<dbReference type="FunFam" id="3.30.470.20:FF:000026">
    <property type="entry name" value="Carbamoyl-phosphate synthase large chain"/>
    <property type="match status" value="1"/>
</dbReference>
<dbReference type="FunFam" id="3.40.50.1380:FF:000011">
    <property type="entry name" value="Carbamoyl-phosphate synthase large chain"/>
    <property type="match status" value="1"/>
</dbReference>
<dbReference type="FunFam" id="3.40.50.20:FF:000001">
    <property type="entry name" value="Carbamoyl-phosphate synthase large chain"/>
    <property type="match status" value="2"/>
</dbReference>
<dbReference type="Gene3D" id="3.40.50.20">
    <property type="match status" value="2"/>
</dbReference>
<dbReference type="Gene3D" id="3.30.1490.20">
    <property type="entry name" value="ATP-grasp fold, A domain"/>
    <property type="match status" value="1"/>
</dbReference>
<dbReference type="Gene3D" id="3.30.470.20">
    <property type="entry name" value="ATP-grasp fold, B domain"/>
    <property type="match status" value="2"/>
</dbReference>
<dbReference type="Gene3D" id="1.10.1030.10">
    <property type="entry name" value="Carbamoyl-phosphate synthetase, large subunit oligomerisation domain"/>
    <property type="match status" value="1"/>
</dbReference>
<dbReference type="Gene3D" id="3.40.50.1380">
    <property type="entry name" value="Methylglyoxal synthase-like domain"/>
    <property type="match status" value="1"/>
</dbReference>
<dbReference type="HAMAP" id="MF_01210_A">
    <property type="entry name" value="CPSase_L_chain_A"/>
    <property type="match status" value="1"/>
</dbReference>
<dbReference type="HAMAP" id="MF_01210_B">
    <property type="entry name" value="CPSase_L_chain_B"/>
    <property type="match status" value="1"/>
</dbReference>
<dbReference type="InterPro" id="IPR011761">
    <property type="entry name" value="ATP-grasp"/>
</dbReference>
<dbReference type="InterPro" id="IPR013815">
    <property type="entry name" value="ATP_grasp_subdomain_1"/>
</dbReference>
<dbReference type="InterPro" id="IPR006275">
    <property type="entry name" value="CarbamoylP_synth_lsu"/>
</dbReference>
<dbReference type="InterPro" id="IPR005480">
    <property type="entry name" value="CarbamoylP_synth_lsu_oligo"/>
</dbReference>
<dbReference type="InterPro" id="IPR036897">
    <property type="entry name" value="CarbamoylP_synth_lsu_oligo_sf"/>
</dbReference>
<dbReference type="InterPro" id="IPR005479">
    <property type="entry name" value="CbamoylP_synth_lsu-like_ATP-bd"/>
</dbReference>
<dbReference type="InterPro" id="IPR005483">
    <property type="entry name" value="CbamoylP_synth_lsu_CPSase_dom"/>
</dbReference>
<dbReference type="InterPro" id="IPR011607">
    <property type="entry name" value="MGS-like_dom"/>
</dbReference>
<dbReference type="InterPro" id="IPR036914">
    <property type="entry name" value="MGS-like_dom_sf"/>
</dbReference>
<dbReference type="InterPro" id="IPR033937">
    <property type="entry name" value="MGS_CPS_CarB"/>
</dbReference>
<dbReference type="InterPro" id="IPR016185">
    <property type="entry name" value="PreATP-grasp_dom_sf"/>
</dbReference>
<dbReference type="NCBIfam" id="TIGR01369">
    <property type="entry name" value="CPSaseII_lrg"/>
    <property type="match status" value="1"/>
</dbReference>
<dbReference type="NCBIfam" id="NF003671">
    <property type="entry name" value="PRK05294.1"/>
    <property type="match status" value="1"/>
</dbReference>
<dbReference type="NCBIfam" id="NF009455">
    <property type="entry name" value="PRK12815.1"/>
    <property type="match status" value="1"/>
</dbReference>
<dbReference type="PANTHER" id="PTHR11405:SF53">
    <property type="entry name" value="CARBAMOYL-PHOSPHATE SYNTHASE [AMMONIA], MITOCHONDRIAL"/>
    <property type="match status" value="1"/>
</dbReference>
<dbReference type="PANTHER" id="PTHR11405">
    <property type="entry name" value="CARBAMOYLTRANSFERASE FAMILY MEMBER"/>
    <property type="match status" value="1"/>
</dbReference>
<dbReference type="Pfam" id="PF02786">
    <property type="entry name" value="CPSase_L_D2"/>
    <property type="match status" value="2"/>
</dbReference>
<dbReference type="Pfam" id="PF02787">
    <property type="entry name" value="CPSase_L_D3"/>
    <property type="match status" value="1"/>
</dbReference>
<dbReference type="Pfam" id="PF02142">
    <property type="entry name" value="MGS"/>
    <property type="match status" value="1"/>
</dbReference>
<dbReference type="PRINTS" id="PR00098">
    <property type="entry name" value="CPSASE"/>
</dbReference>
<dbReference type="SMART" id="SM01096">
    <property type="entry name" value="CPSase_L_D3"/>
    <property type="match status" value="1"/>
</dbReference>
<dbReference type="SMART" id="SM01209">
    <property type="entry name" value="GARS_A"/>
    <property type="match status" value="1"/>
</dbReference>
<dbReference type="SMART" id="SM00851">
    <property type="entry name" value="MGS"/>
    <property type="match status" value="1"/>
</dbReference>
<dbReference type="SUPFAM" id="SSF48108">
    <property type="entry name" value="Carbamoyl phosphate synthetase, large subunit connection domain"/>
    <property type="match status" value="1"/>
</dbReference>
<dbReference type="SUPFAM" id="SSF56059">
    <property type="entry name" value="Glutathione synthetase ATP-binding domain-like"/>
    <property type="match status" value="2"/>
</dbReference>
<dbReference type="SUPFAM" id="SSF52335">
    <property type="entry name" value="Methylglyoxal synthase-like"/>
    <property type="match status" value="1"/>
</dbReference>
<dbReference type="SUPFAM" id="SSF52440">
    <property type="entry name" value="PreATP-grasp domain"/>
    <property type="match status" value="2"/>
</dbReference>
<dbReference type="PROSITE" id="PS50975">
    <property type="entry name" value="ATP_GRASP"/>
    <property type="match status" value="2"/>
</dbReference>
<dbReference type="PROSITE" id="PS00866">
    <property type="entry name" value="CPSASE_1"/>
    <property type="match status" value="2"/>
</dbReference>
<dbReference type="PROSITE" id="PS00867">
    <property type="entry name" value="CPSASE_2"/>
    <property type="match status" value="2"/>
</dbReference>
<dbReference type="PROSITE" id="PS51855">
    <property type="entry name" value="MGS"/>
    <property type="match status" value="1"/>
</dbReference>
<comment type="function">
    <text evidence="1">Large subunit of the glutamine-dependent carbamoyl phosphate synthetase (CPSase). CPSase catalyzes the formation of carbamoyl phosphate from the ammonia moiety of glutamine, carbonate, and phosphate donated by ATP, constituting the first step of 2 biosynthetic pathways, one leading to arginine and/or urea and the other to pyrimidine nucleotides. The large subunit (synthetase) binds the substrates ammonia (free or transferred from glutamine from the small subunit), hydrogencarbonate and ATP and carries out an ATP-coupled ligase reaction, activating hydrogencarbonate by forming carboxy phosphate which reacts with ammonia to form carbamoyl phosphate.</text>
</comment>
<comment type="catalytic activity">
    <reaction evidence="1">
        <text>hydrogencarbonate + L-glutamine + 2 ATP + H2O = carbamoyl phosphate + L-glutamate + 2 ADP + phosphate + 2 H(+)</text>
        <dbReference type="Rhea" id="RHEA:18633"/>
        <dbReference type="ChEBI" id="CHEBI:15377"/>
        <dbReference type="ChEBI" id="CHEBI:15378"/>
        <dbReference type="ChEBI" id="CHEBI:17544"/>
        <dbReference type="ChEBI" id="CHEBI:29985"/>
        <dbReference type="ChEBI" id="CHEBI:30616"/>
        <dbReference type="ChEBI" id="CHEBI:43474"/>
        <dbReference type="ChEBI" id="CHEBI:58228"/>
        <dbReference type="ChEBI" id="CHEBI:58359"/>
        <dbReference type="ChEBI" id="CHEBI:456216"/>
        <dbReference type="EC" id="6.3.5.5"/>
    </reaction>
</comment>
<comment type="catalytic activity">
    <molecule>Carbamoyl phosphate synthase large chain</molecule>
    <reaction evidence="1">
        <text>hydrogencarbonate + NH4(+) + 2 ATP = carbamoyl phosphate + 2 ADP + phosphate + 2 H(+)</text>
        <dbReference type="Rhea" id="RHEA:18029"/>
        <dbReference type="ChEBI" id="CHEBI:15378"/>
        <dbReference type="ChEBI" id="CHEBI:17544"/>
        <dbReference type="ChEBI" id="CHEBI:28938"/>
        <dbReference type="ChEBI" id="CHEBI:30616"/>
        <dbReference type="ChEBI" id="CHEBI:43474"/>
        <dbReference type="ChEBI" id="CHEBI:58228"/>
        <dbReference type="ChEBI" id="CHEBI:456216"/>
        <dbReference type="EC" id="6.3.4.16"/>
    </reaction>
</comment>
<comment type="cofactor">
    <cofactor evidence="1">
        <name>Mg(2+)</name>
        <dbReference type="ChEBI" id="CHEBI:18420"/>
    </cofactor>
    <cofactor evidence="1">
        <name>Mn(2+)</name>
        <dbReference type="ChEBI" id="CHEBI:29035"/>
    </cofactor>
    <text evidence="1">Binds 4 Mg(2+) or Mn(2+) ions per subunit.</text>
</comment>
<comment type="pathway">
    <text evidence="1">Amino-acid biosynthesis; L-arginine biosynthesis; carbamoyl phosphate from bicarbonate: step 1/1.</text>
</comment>
<comment type="pathway">
    <text evidence="1">Pyrimidine metabolism; UMP biosynthesis via de novo pathway; (S)-dihydroorotate from bicarbonate: step 1/3.</text>
</comment>
<comment type="subunit">
    <text evidence="1">Composed of two chains; the small (or glutamine) chain promotes the hydrolysis of glutamine to ammonia, which is used by the large (or ammonia) chain to synthesize carbamoyl phosphate. Tetramer of heterodimers (alpha,beta)4.</text>
</comment>
<comment type="domain">
    <text evidence="1">The large subunit is composed of 2 ATP-grasp domains that are involved in binding the 2 ATP molecules needed for carbamoyl phosphate synthesis. The N-terminal ATP-grasp domain (referred to as the carboxyphosphate synthetic component) catalyzes the ATP-dependent phosphorylation of hydrogencarbonate to carboxyphosphate and the subsequent nucleophilic attack by ammonia to form a carbamate intermediate. The C-terminal ATP-grasp domain (referred to as the carbamoyl phosphate synthetic component) then catalyzes the phosphorylation of carbamate with the second ATP to form the end product carbamoyl phosphate. The reactive and unstable enzyme intermediates are sequentially channeled from one active site to the next through the interior of the protein over a distance of at least 96 A.</text>
</comment>
<comment type="similarity">
    <text evidence="1">Belongs to the CarB family.</text>
</comment>
<evidence type="ECO:0000255" key="1">
    <source>
        <dbReference type="HAMAP-Rule" id="MF_01210"/>
    </source>
</evidence>